<feature type="chain" id="PRO_1000024103" description="Divalent metal cation transporter MntH">
    <location>
        <begin position="1"/>
        <end position="412"/>
    </location>
</feature>
<feature type="transmembrane region" description="Helical" evidence="1">
    <location>
        <begin position="19"/>
        <end position="39"/>
    </location>
</feature>
<feature type="transmembrane region" description="Helical" evidence="1">
    <location>
        <begin position="46"/>
        <end position="66"/>
    </location>
</feature>
<feature type="transmembrane region" description="Helical" evidence="1">
    <location>
        <begin position="94"/>
        <end position="114"/>
    </location>
</feature>
<feature type="transmembrane region" description="Helical" evidence="1">
    <location>
        <begin position="122"/>
        <end position="142"/>
    </location>
</feature>
<feature type="transmembrane region" description="Helical" evidence="1">
    <location>
        <begin position="156"/>
        <end position="176"/>
    </location>
</feature>
<feature type="transmembrane region" description="Helical" evidence="1">
    <location>
        <begin position="196"/>
        <end position="216"/>
    </location>
</feature>
<feature type="transmembrane region" description="Helical" evidence="1">
    <location>
        <begin position="241"/>
        <end position="261"/>
    </location>
</feature>
<feature type="transmembrane region" description="Helical" evidence="1">
    <location>
        <begin position="290"/>
        <end position="310"/>
    </location>
</feature>
<feature type="transmembrane region" description="Helical" evidence="1">
    <location>
        <begin position="322"/>
        <end position="342"/>
    </location>
</feature>
<feature type="transmembrane region" description="Helical" evidence="1">
    <location>
        <begin position="348"/>
        <end position="368"/>
    </location>
</feature>
<feature type="transmembrane region" description="Helical" evidence="1">
    <location>
        <begin position="392"/>
        <end position="412"/>
    </location>
</feature>
<comment type="function">
    <text evidence="1">H(+)-stimulated, divalent metal cation uptake system.</text>
</comment>
<comment type="subcellular location">
    <subcellularLocation>
        <location evidence="1">Cell inner membrane</location>
        <topology evidence="1">Multi-pass membrane protein</topology>
    </subcellularLocation>
</comment>
<comment type="similarity">
    <text evidence="1">Belongs to the NRAMP family.</text>
</comment>
<gene>
    <name evidence="1" type="primary">mntH</name>
    <name type="ordered locus">ESA_00848</name>
</gene>
<accession>A7MP48</accession>
<protein>
    <recommendedName>
        <fullName evidence="1">Divalent metal cation transporter MntH</fullName>
    </recommendedName>
</protein>
<organism>
    <name type="scientific">Cronobacter sakazakii (strain ATCC BAA-894)</name>
    <name type="common">Enterobacter sakazakii</name>
    <dbReference type="NCBI Taxonomy" id="290339"/>
    <lineage>
        <taxon>Bacteria</taxon>
        <taxon>Pseudomonadati</taxon>
        <taxon>Pseudomonadota</taxon>
        <taxon>Gammaproteobacteria</taxon>
        <taxon>Enterobacterales</taxon>
        <taxon>Enterobacteriaceae</taxon>
        <taxon>Cronobacter</taxon>
    </lineage>
</organism>
<name>MNTH_CROS8</name>
<proteinExistence type="inferred from homology"/>
<sequence length="412" mass="44395">MNHTRVEQNRGRTARKLRLALMGPAFIAAIGYIDPGNFATNIQAGASFGYQLLWVVVWANLMAMLIQVLSAKLGIATGKNLAEQIRDHYPRPVVWFYWVQAEIIAMATDLAEFIGAAIGFKLILGVSLLQGAVLTGIATFLILMLQKRGQKPLEKVIGGLLLFVAAAYIVELFFSQPKLAELGKGMLIPSLPTSEAVFLAAGVLGATIMPHVIYLHSSLTQNLHDGSRKERYSATKWDVAIAMTIAGFVNLAMMATAAAAFHFSGHTKVAELDQAYLTLEPLLSHAAATIFGLSLVAAGLSSTVVGTLAGQVVMQGFVRFSIPLWVRRAVTMAPSFIVILMGLDPTRILVMSQVLLSFGIALALVPLLFFTSNKALMAELVNTPWVKRTGWAIVVLVVALNIWLLVGTALGL</sequence>
<dbReference type="EMBL" id="CP000783">
    <property type="protein sequence ID" value="ABU76119.1"/>
    <property type="molecule type" value="Genomic_DNA"/>
</dbReference>
<dbReference type="RefSeq" id="WP_012124106.1">
    <property type="nucleotide sequence ID" value="NC_009778.1"/>
</dbReference>
<dbReference type="SMR" id="A7MP48"/>
<dbReference type="KEGG" id="esa:ESA_00848"/>
<dbReference type="PATRIC" id="fig|290339.8.peg.751"/>
<dbReference type="HOGENOM" id="CLU_020088_2_0_6"/>
<dbReference type="Proteomes" id="UP000000260">
    <property type="component" value="Chromosome"/>
</dbReference>
<dbReference type="GO" id="GO:0005886">
    <property type="term" value="C:plasma membrane"/>
    <property type="evidence" value="ECO:0007669"/>
    <property type="project" value="UniProtKB-SubCell"/>
</dbReference>
<dbReference type="GO" id="GO:0015086">
    <property type="term" value="F:cadmium ion transmembrane transporter activity"/>
    <property type="evidence" value="ECO:0007669"/>
    <property type="project" value="TreeGrafter"/>
</dbReference>
<dbReference type="GO" id="GO:0005384">
    <property type="term" value="F:manganese ion transmembrane transporter activity"/>
    <property type="evidence" value="ECO:0007669"/>
    <property type="project" value="TreeGrafter"/>
</dbReference>
<dbReference type="GO" id="GO:0046872">
    <property type="term" value="F:metal ion binding"/>
    <property type="evidence" value="ECO:0007669"/>
    <property type="project" value="UniProtKB-UniRule"/>
</dbReference>
<dbReference type="GO" id="GO:0015293">
    <property type="term" value="F:symporter activity"/>
    <property type="evidence" value="ECO:0007669"/>
    <property type="project" value="UniProtKB-UniRule"/>
</dbReference>
<dbReference type="GO" id="GO:0034755">
    <property type="term" value="P:iron ion transmembrane transport"/>
    <property type="evidence" value="ECO:0007669"/>
    <property type="project" value="TreeGrafter"/>
</dbReference>
<dbReference type="HAMAP" id="MF_00221">
    <property type="entry name" value="NRAMP"/>
    <property type="match status" value="1"/>
</dbReference>
<dbReference type="InterPro" id="IPR001046">
    <property type="entry name" value="NRAMP_fam"/>
</dbReference>
<dbReference type="NCBIfam" id="TIGR01197">
    <property type="entry name" value="nramp"/>
    <property type="match status" value="1"/>
</dbReference>
<dbReference type="NCBIfam" id="NF037982">
    <property type="entry name" value="Nramp_1"/>
    <property type="match status" value="1"/>
</dbReference>
<dbReference type="NCBIfam" id="NF001923">
    <property type="entry name" value="PRK00701.1"/>
    <property type="match status" value="1"/>
</dbReference>
<dbReference type="PANTHER" id="PTHR11706:SF33">
    <property type="entry name" value="NATURAL RESISTANCE-ASSOCIATED MACROPHAGE PROTEIN 2"/>
    <property type="match status" value="1"/>
</dbReference>
<dbReference type="PANTHER" id="PTHR11706">
    <property type="entry name" value="SOLUTE CARRIER PROTEIN FAMILY 11 MEMBER"/>
    <property type="match status" value="1"/>
</dbReference>
<dbReference type="Pfam" id="PF01566">
    <property type="entry name" value="Nramp"/>
    <property type="match status" value="1"/>
</dbReference>
<dbReference type="PRINTS" id="PR00447">
    <property type="entry name" value="NATRESASSCMP"/>
</dbReference>
<keyword id="KW-0997">Cell inner membrane</keyword>
<keyword id="KW-1003">Cell membrane</keyword>
<keyword id="KW-0406">Ion transport</keyword>
<keyword id="KW-0472">Membrane</keyword>
<keyword id="KW-1185">Reference proteome</keyword>
<keyword id="KW-0769">Symport</keyword>
<keyword id="KW-0812">Transmembrane</keyword>
<keyword id="KW-1133">Transmembrane helix</keyword>
<keyword id="KW-0813">Transport</keyword>
<evidence type="ECO:0000255" key="1">
    <source>
        <dbReference type="HAMAP-Rule" id="MF_00221"/>
    </source>
</evidence>
<reference key="1">
    <citation type="journal article" date="2010" name="PLoS ONE">
        <title>Genome sequence of Cronobacter sakazakii BAA-894 and comparative genomic hybridization analysis with other Cronobacter species.</title>
        <authorList>
            <person name="Kucerova E."/>
            <person name="Clifton S.W."/>
            <person name="Xia X.Q."/>
            <person name="Long F."/>
            <person name="Porwollik S."/>
            <person name="Fulton L."/>
            <person name="Fronick C."/>
            <person name="Minx P."/>
            <person name="Kyung K."/>
            <person name="Warren W."/>
            <person name="Fulton R."/>
            <person name="Feng D."/>
            <person name="Wollam A."/>
            <person name="Shah N."/>
            <person name="Bhonagiri V."/>
            <person name="Nash W.E."/>
            <person name="Hallsworth-Pepin K."/>
            <person name="Wilson R.K."/>
            <person name="McClelland M."/>
            <person name="Forsythe S.J."/>
        </authorList>
    </citation>
    <scope>NUCLEOTIDE SEQUENCE [LARGE SCALE GENOMIC DNA]</scope>
    <source>
        <strain>ATCC BAA-894</strain>
    </source>
</reference>